<gene>
    <name evidence="1" type="primary">gatC</name>
    <name type="ordered locus">ckrop_1253</name>
</gene>
<organism>
    <name type="scientific">Corynebacterium kroppenstedtii (strain DSM 44385 / JCM 11950 / CIP 105744 / CCUG 35717)</name>
    <dbReference type="NCBI Taxonomy" id="645127"/>
    <lineage>
        <taxon>Bacteria</taxon>
        <taxon>Bacillati</taxon>
        <taxon>Actinomycetota</taxon>
        <taxon>Actinomycetes</taxon>
        <taxon>Mycobacteriales</taxon>
        <taxon>Corynebacteriaceae</taxon>
        <taxon>Corynebacterium</taxon>
    </lineage>
</organism>
<proteinExistence type="inferred from homology"/>
<sequence>MSSISRDEVAHLARLSRLSLTDDELDEFADQIDGIIEHVQKVSNVDTEGVEPMSHPSDLAGVMREDEVHPTLTAEQALDQAPASQRDRFEVPRILGE</sequence>
<reference key="1">
    <citation type="journal article" date="2008" name="J. Biotechnol.">
        <title>Ultrafast pyrosequencing of Corynebacterium kroppenstedtii DSM44385 revealed insights into the physiology of a lipophilic corynebacterium that lacks mycolic acids.</title>
        <authorList>
            <person name="Tauch A."/>
            <person name="Schneider J."/>
            <person name="Szczepanowski R."/>
            <person name="Tilker A."/>
            <person name="Viehoever P."/>
            <person name="Gartemann K.-H."/>
            <person name="Arnold W."/>
            <person name="Blom J."/>
            <person name="Brinkrolf K."/>
            <person name="Brune I."/>
            <person name="Goetker S."/>
            <person name="Weisshaar B."/>
            <person name="Goesmann A."/>
            <person name="Droege M."/>
            <person name="Puehler A."/>
        </authorList>
    </citation>
    <scope>NUCLEOTIDE SEQUENCE [LARGE SCALE GENOMIC DNA]</scope>
    <source>
        <strain>DSM 44385 / JCM 11950 / CIP 105744 / CCUG 35717</strain>
    </source>
</reference>
<name>GATC_CORK4</name>
<evidence type="ECO:0000255" key="1">
    <source>
        <dbReference type="HAMAP-Rule" id="MF_00122"/>
    </source>
</evidence>
<evidence type="ECO:0000256" key="2">
    <source>
        <dbReference type="SAM" id="MobiDB-lite"/>
    </source>
</evidence>
<keyword id="KW-0067">ATP-binding</keyword>
<keyword id="KW-0436">Ligase</keyword>
<keyword id="KW-0547">Nucleotide-binding</keyword>
<keyword id="KW-0648">Protein biosynthesis</keyword>
<keyword id="KW-1185">Reference proteome</keyword>
<feature type="chain" id="PRO_1000203066" description="Aspartyl/glutamyl-tRNA(Asn/Gln) amidotransferase subunit C">
    <location>
        <begin position="1"/>
        <end position="97"/>
    </location>
</feature>
<feature type="region of interest" description="Disordered" evidence="2">
    <location>
        <begin position="74"/>
        <end position="97"/>
    </location>
</feature>
<feature type="compositionally biased region" description="Basic and acidic residues" evidence="2">
    <location>
        <begin position="85"/>
        <end position="97"/>
    </location>
</feature>
<protein>
    <recommendedName>
        <fullName evidence="1">Aspartyl/glutamyl-tRNA(Asn/Gln) amidotransferase subunit C</fullName>
        <shortName evidence="1">Asp/Glu-ADT subunit C</shortName>
        <ecNumber evidence="1">6.3.5.-</ecNumber>
    </recommendedName>
</protein>
<dbReference type="EC" id="6.3.5.-" evidence="1"/>
<dbReference type="EMBL" id="CP001620">
    <property type="protein sequence ID" value="ACR17997.1"/>
    <property type="molecule type" value="Genomic_DNA"/>
</dbReference>
<dbReference type="RefSeq" id="WP_012731884.1">
    <property type="nucleotide sequence ID" value="NC_012704.1"/>
</dbReference>
<dbReference type="SMR" id="C4LJJ2"/>
<dbReference type="STRING" id="645127.ckrop_1253"/>
<dbReference type="KEGG" id="ckp:ckrop_1253"/>
<dbReference type="eggNOG" id="COG0721">
    <property type="taxonomic scope" value="Bacteria"/>
</dbReference>
<dbReference type="HOGENOM" id="CLU_105899_1_0_11"/>
<dbReference type="OrthoDB" id="5295223at2"/>
<dbReference type="Proteomes" id="UP000001473">
    <property type="component" value="Chromosome"/>
</dbReference>
<dbReference type="GO" id="GO:0050566">
    <property type="term" value="F:asparaginyl-tRNA synthase (glutamine-hydrolyzing) activity"/>
    <property type="evidence" value="ECO:0007669"/>
    <property type="project" value="RHEA"/>
</dbReference>
<dbReference type="GO" id="GO:0005524">
    <property type="term" value="F:ATP binding"/>
    <property type="evidence" value="ECO:0007669"/>
    <property type="project" value="UniProtKB-KW"/>
</dbReference>
<dbReference type="GO" id="GO:0050567">
    <property type="term" value="F:glutaminyl-tRNA synthase (glutamine-hydrolyzing) activity"/>
    <property type="evidence" value="ECO:0007669"/>
    <property type="project" value="UniProtKB-UniRule"/>
</dbReference>
<dbReference type="GO" id="GO:0070681">
    <property type="term" value="P:glutaminyl-tRNAGln biosynthesis via transamidation"/>
    <property type="evidence" value="ECO:0007669"/>
    <property type="project" value="TreeGrafter"/>
</dbReference>
<dbReference type="GO" id="GO:0006450">
    <property type="term" value="P:regulation of translational fidelity"/>
    <property type="evidence" value="ECO:0007669"/>
    <property type="project" value="InterPro"/>
</dbReference>
<dbReference type="GO" id="GO:0006412">
    <property type="term" value="P:translation"/>
    <property type="evidence" value="ECO:0007669"/>
    <property type="project" value="UniProtKB-UniRule"/>
</dbReference>
<dbReference type="Gene3D" id="1.10.20.60">
    <property type="entry name" value="Glu-tRNAGln amidotransferase C subunit, N-terminal domain"/>
    <property type="match status" value="1"/>
</dbReference>
<dbReference type="HAMAP" id="MF_00122">
    <property type="entry name" value="GatC"/>
    <property type="match status" value="1"/>
</dbReference>
<dbReference type="InterPro" id="IPR036113">
    <property type="entry name" value="Asp/Glu-ADT_sf_sub_c"/>
</dbReference>
<dbReference type="InterPro" id="IPR003837">
    <property type="entry name" value="GatC"/>
</dbReference>
<dbReference type="NCBIfam" id="TIGR00135">
    <property type="entry name" value="gatC"/>
    <property type="match status" value="1"/>
</dbReference>
<dbReference type="PANTHER" id="PTHR15004">
    <property type="entry name" value="GLUTAMYL-TRNA(GLN) AMIDOTRANSFERASE SUBUNIT C, MITOCHONDRIAL"/>
    <property type="match status" value="1"/>
</dbReference>
<dbReference type="PANTHER" id="PTHR15004:SF0">
    <property type="entry name" value="GLUTAMYL-TRNA(GLN) AMIDOTRANSFERASE SUBUNIT C, MITOCHONDRIAL"/>
    <property type="match status" value="1"/>
</dbReference>
<dbReference type="Pfam" id="PF02686">
    <property type="entry name" value="GatC"/>
    <property type="match status" value="1"/>
</dbReference>
<dbReference type="SUPFAM" id="SSF141000">
    <property type="entry name" value="Glu-tRNAGln amidotransferase C subunit"/>
    <property type="match status" value="1"/>
</dbReference>
<accession>C4LJJ2</accession>
<comment type="function">
    <text evidence="1">Allows the formation of correctly charged Asn-tRNA(Asn) or Gln-tRNA(Gln) through the transamidation of misacylated Asp-tRNA(Asn) or Glu-tRNA(Gln) in organisms which lack either or both of asparaginyl-tRNA or glutaminyl-tRNA synthetases. The reaction takes place in the presence of glutamine and ATP through an activated phospho-Asp-tRNA(Asn) or phospho-Glu-tRNA(Gln).</text>
</comment>
<comment type="catalytic activity">
    <reaction evidence="1">
        <text>L-glutamyl-tRNA(Gln) + L-glutamine + ATP + H2O = L-glutaminyl-tRNA(Gln) + L-glutamate + ADP + phosphate + H(+)</text>
        <dbReference type="Rhea" id="RHEA:17521"/>
        <dbReference type="Rhea" id="RHEA-COMP:9681"/>
        <dbReference type="Rhea" id="RHEA-COMP:9684"/>
        <dbReference type="ChEBI" id="CHEBI:15377"/>
        <dbReference type="ChEBI" id="CHEBI:15378"/>
        <dbReference type="ChEBI" id="CHEBI:29985"/>
        <dbReference type="ChEBI" id="CHEBI:30616"/>
        <dbReference type="ChEBI" id="CHEBI:43474"/>
        <dbReference type="ChEBI" id="CHEBI:58359"/>
        <dbReference type="ChEBI" id="CHEBI:78520"/>
        <dbReference type="ChEBI" id="CHEBI:78521"/>
        <dbReference type="ChEBI" id="CHEBI:456216"/>
    </reaction>
</comment>
<comment type="catalytic activity">
    <reaction evidence="1">
        <text>L-aspartyl-tRNA(Asn) + L-glutamine + ATP + H2O = L-asparaginyl-tRNA(Asn) + L-glutamate + ADP + phosphate + 2 H(+)</text>
        <dbReference type="Rhea" id="RHEA:14513"/>
        <dbReference type="Rhea" id="RHEA-COMP:9674"/>
        <dbReference type="Rhea" id="RHEA-COMP:9677"/>
        <dbReference type="ChEBI" id="CHEBI:15377"/>
        <dbReference type="ChEBI" id="CHEBI:15378"/>
        <dbReference type="ChEBI" id="CHEBI:29985"/>
        <dbReference type="ChEBI" id="CHEBI:30616"/>
        <dbReference type="ChEBI" id="CHEBI:43474"/>
        <dbReference type="ChEBI" id="CHEBI:58359"/>
        <dbReference type="ChEBI" id="CHEBI:78515"/>
        <dbReference type="ChEBI" id="CHEBI:78516"/>
        <dbReference type="ChEBI" id="CHEBI:456216"/>
    </reaction>
</comment>
<comment type="subunit">
    <text evidence="1">Heterotrimer of A, B and C subunits.</text>
</comment>
<comment type="similarity">
    <text evidence="1">Belongs to the GatC family.</text>
</comment>